<proteinExistence type="evidence at protein level"/>
<accession>Q96GS6</accession>
<accession>A8K0G8</accession>
<accession>D6W5Z9</accession>
<accession>Q6PJU2</accession>
<accession>Q8WUH9</accession>
<accession>Q9BWL0</accession>
<accession>Q9H7Q9</accession>
<organism>
    <name type="scientific">Homo sapiens</name>
    <name type="common">Human</name>
    <dbReference type="NCBI Taxonomy" id="9606"/>
    <lineage>
        <taxon>Eukaryota</taxon>
        <taxon>Metazoa</taxon>
        <taxon>Chordata</taxon>
        <taxon>Craniata</taxon>
        <taxon>Vertebrata</taxon>
        <taxon>Euteleostomi</taxon>
        <taxon>Mammalia</taxon>
        <taxon>Eutheria</taxon>
        <taxon>Euarchontoglires</taxon>
        <taxon>Primates</taxon>
        <taxon>Haplorrhini</taxon>
        <taxon>Catarrhini</taxon>
        <taxon>Hominidae</taxon>
        <taxon>Homo</taxon>
    </lineage>
</organism>
<sequence>MNGLSLSELCCLFCCPPCPGRIAAKLAFLPPEATYSLVPEPEPGPGGAGAAPLGTLRASSGAPGRWKLHLTERADFQYSQRELDTIEVFPTKSARGNRVSCMYVRCVPGARYTVLFSHGNAVDLGQMSSFYIGLGSRLHCNIFSYDYSGYGASSGRPSERNLYADIDAAWQALRTRYGISPDSIILYGQSIGTVPTVDLASRYECAAVVLHSPLTSGMRVAFPDTKKTYCFDAFPNIEKVSKITSPVLIIHGTEDEVIDFSHGLALYERCPKAVEPLWVEGAGHNDIELYSQYLERLRRFISQELPSQRA</sequence>
<evidence type="ECO:0000250" key="1">
    <source>
        <dbReference type="UniProtKB" id="O75608"/>
    </source>
</evidence>
<evidence type="ECO:0000250" key="2">
    <source>
        <dbReference type="UniProtKB" id="Q5XIJ5"/>
    </source>
</evidence>
<evidence type="ECO:0000250" key="3">
    <source>
        <dbReference type="UniProtKB" id="Q7M759"/>
    </source>
</evidence>
<evidence type="ECO:0000269" key="4">
    <source>
    </source>
</evidence>
<evidence type="ECO:0000303" key="5">
    <source>
    </source>
</evidence>
<evidence type="ECO:0000303" key="6">
    <source>
    </source>
</evidence>
<evidence type="ECO:0000305" key="7"/>
<evidence type="ECO:0000305" key="8">
    <source>
    </source>
</evidence>
<evidence type="ECO:0000312" key="9">
    <source>
        <dbReference type="HGNC" id="HGNC:28756"/>
    </source>
</evidence>
<evidence type="ECO:0007744" key="10">
    <source>
    </source>
</evidence>
<feature type="chain" id="PRO_0000297509" description="Alpha/beta hydrolase domain-containing protein 17A">
    <location>
        <begin position="1"/>
        <end position="310"/>
    </location>
</feature>
<feature type="active site" description="Charge relay system" evidence="8">
    <location>
        <position position="190"/>
    </location>
</feature>
<feature type="active site" description="Charge relay system" evidence="1">
    <location>
        <position position="255"/>
    </location>
</feature>
<feature type="active site" description="Charge relay system" evidence="1">
    <location>
        <position position="284"/>
    </location>
</feature>
<feature type="modified residue" description="Phosphoserine" evidence="10">
    <location>
        <position position="307"/>
    </location>
</feature>
<feature type="splice variant" id="VSP_027268" description="In isoform 2." evidence="6">
    <original>G</original>
    <variation>GARQGHQAQGGHPQLAWVGRLGDSNNPAPGGCLLGKSWGTGAALACGYIHLL</variation>
    <location>
        <position position="109"/>
    </location>
</feature>
<feature type="splice variant" id="VSP_027271" description="In isoform 4." evidence="5">
    <location>
        <begin position="177"/>
        <end position="310"/>
    </location>
</feature>
<feature type="splice variant" id="VSP_027269" description="In isoform 3." evidence="6">
    <original>N</original>
    <variation>K</variation>
    <location>
        <position position="236"/>
    </location>
</feature>
<feature type="splice variant" id="VSP_027270" description="In isoform 3." evidence="6">
    <location>
        <begin position="237"/>
        <end position="310"/>
    </location>
</feature>
<feature type="mutagenesis site" description="Reduces catalytic activity. Loss of membrane localization. No effect on NRAS plasma membrane localization." evidence="4">
    <location>
        <begin position="1"/>
        <end position="19"/>
    </location>
</feature>
<feature type="mutagenesis site" description="Loss of catalytic activity. No effect on its localization. No effect on NRAS plasma membrane localization." evidence="4">
    <original>S</original>
    <variation>A</variation>
    <location>
        <position position="190"/>
    </location>
</feature>
<feature type="sequence conflict" description="In Ref. 4; AAH00158/AAH11667." evidence="7" ref="4">
    <original>R</original>
    <variation>H</variation>
    <location>
        <position position="98"/>
    </location>
</feature>
<feature type="sequence conflict" description="In Ref. 4; AAH20512." evidence="7" ref="4">
    <original>K</original>
    <variation>E</variation>
    <location sequence="Q96GS6-2">
        <position position="144"/>
    </location>
</feature>
<keyword id="KW-0025">Alternative splicing</keyword>
<keyword id="KW-1003">Cell membrane</keyword>
<keyword id="KW-0966">Cell projection</keyword>
<keyword id="KW-0967">Endosome</keyword>
<keyword id="KW-0378">Hydrolase</keyword>
<keyword id="KW-0449">Lipoprotein</keyword>
<keyword id="KW-0472">Membrane</keyword>
<keyword id="KW-0564">Palmitate</keyword>
<keyword id="KW-0597">Phosphoprotein</keyword>
<keyword id="KW-0628">Postsynaptic cell membrane</keyword>
<keyword id="KW-1267">Proteomics identification</keyword>
<keyword id="KW-1185">Reference proteome</keyword>
<keyword id="KW-0770">Synapse</keyword>
<gene>
    <name evidence="9" type="primary">ABHD17A</name>
    <name type="synonym">C19orf27</name>
    <name type="synonym">FAM108A1</name>
</gene>
<reference key="1">
    <citation type="journal article" date="2004" name="Nat. Genet.">
        <title>Complete sequencing and characterization of 21,243 full-length human cDNAs.</title>
        <authorList>
            <person name="Ota T."/>
            <person name="Suzuki Y."/>
            <person name="Nishikawa T."/>
            <person name="Otsuki T."/>
            <person name="Sugiyama T."/>
            <person name="Irie R."/>
            <person name="Wakamatsu A."/>
            <person name="Hayashi K."/>
            <person name="Sato H."/>
            <person name="Nagai K."/>
            <person name="Kimura K."/>
            <person name="Makita H."/>
            <person name="Sekine M."/>
            <person name="Obayashi M."/>
            <person name="Nishi T."/>
            <person name="Shibahara T."/>
            <person name="Tanaka T."/>
            <person name="Ishii S."/>
            <person name="Yamamoto J."/>
            <person name="Saito K."/>
            <person name="Kawai Y."/>
            <person name="Isono Y."/>
            <person name="Nakamura Y."/>
            <person name="Nagahari K."/>
            <person name="Murakami K."/>
            <person name="Yasuda T."/>
            <person name="Iwayanagi T."/>
            <person name="Wagatsuma M."/>
            <person name="Shiratori A."/>
            <person name="Sudo H."/>
            <person name="Hosoiri T."/>
            <person name="Kaku Y."/>
            <person name="Kodaira H."/>
            <person name="Kondo H."/>
            <person name="Sugawara M."/>
            <person name="Takahashi M."/>
            <person name="Kanda K."/>
            <person name="Yokoi T."/>
            <person name="Furuya T."/>
            <person name="Kikkawa E."/>
            <person name="Omura Y."/>
            <person name="Abe K."/>
            <person name="Kamihara K."/>
            <person name="Katsuta N."/>
            <person name="Sato K."/>
            <person name="Tanikawa M."/>
            <person name="Yamazaki M."/>
            <person name="Ninomiya K."/>
            <person name="Ishibashi T."/>
            <person name="Yamashita H."/>
            <person name="Murakawa K."/>
            <person name="Fujimori K."/>
            <person name="Tanai H."/>
            <person name="Kimata M."/>
            <person name="Watanabe M."/>
            <person name="Hiraoka S."/>
            <person name="Chiba Y."/>
            <person name="Ishida S."/>
            <person name="Ono Y."/>
            <person name="Takiguchi S."/>
            <person name="Watanabe S."/>
            <person name="Yosida M."/>
            <person name="Hotuta T."/>
            <person name="Kusano J."/>
            <person name="Kanehori K."/>
            <person name="Takahashi-Fujii A."/>
            <person name="Hara H."/>
            <person name="Tanase T.-O."/>
            <person name="Nomura Y."/>
            <person name="Togiya S."/>
            <person name="Komai F."/>
            <person name="Hara R."/>
            <person name="Takeuchi K."/>
            <person name="Arita M."/>
            <person name="Imose N."/>
            <person name="Musashino K."/>
            <person name="Yuuki H."/>
            <person name="Oshima A."/>
            <person name="Sasaki N."/>
            <person name="Aotsuka S."/>
            <person name="Yoshikawa Y."/>
            <person name="Matsunawa H."/>
            <person name="Ichihara T."/>
            <person name="Shiohata N."/>
            <person name="Sano S."/>
            <person name="Moriya S."/>
            <person name="Momiyama H."/>
            <person name="Satoh N."/>
            <person name="Takami S."/>
            <person name="Terashima Y."/>
            <person name="Suzuki O."/>
            <person name="Nakagawa S."/>
            <person name="Senoh A."/>
            <person name="Mizoguchi H."/>
            <person name="Goto Y."/>
            <person name="Shimizu F."/>
            <person name="Wakebe H."/>
            <person name="Hishigaki H."/>
            <person name="Watanabe T."/>
            <person name="Sugiyama A."/>
            <person name="Takemoto M."/>
            <person name="Kawakami B."/>
            <person name="Yamazaki M."/>
            <person name="Watanabe K."/>
            <person name="Kumagai A."/>
            <person name="Itakura S."/>
            <person name="Fukuzumi Y."/>
            <person name="Fujimori Y."/>
            <person name="Komiyama M."/>
            <person name="Tashiro H."/>
            <person name="Tanigami A."/>
            <person name="Fujiwara T."/>
            <person name="Ono T."/>
            <person name="Yamada K."/>
            <person name="Fujii Y."/>
            <person name="Ozaki K."/>
            <person name="Hirao M."/>
            <person name="Ohmori Y."/>
            <person name="Kawabata A."/>
            <person name="Hikiji T."/>
            <person name="Kobatake N."/>
            <person name="Inagaki H."/>
            <person name="Ikema Y."/>
            <person name="Okamoto S."/>
            <person name="Okitani R."/>
            <person name="Kawakami T."/>
            <person name="Noguchi S."/>
            <person name="Itoh T."/>
            <person name="Shigeta K."/>
            <person name="Senba T."/>
            <person name="Matsumura K."/>
            <person name="Nakajima Y."/>
            <person name="Mizuno T."/>
            <person name="Morinaga M."/>
            <person name="Sasaki M."/>
            <person name="Togashi T."/>
            <person name="Oyama M."/>
            <person name="Hata H."/>
            <person name="Watanabe M."/>
            <person name="Komatsu T."/>
            <person name="Mizushima-Sugano J."/>
            <person name="Satoh T."/>
            <person name="Shirai Y."/>
            <person name="Takahashi Y."/>
            <person name="Nakagawa K."/>
            <person name="Okumura K."/>
            <person name="Nagase T."/>
            <person name="Nomura N."/>
            <person name="Kikuchi H."/>
            <person name="Masuho Y."/>
            <person name="Yamashita R."/>
            <person name="Nakai K."/>
            <person name="Yada T."/>
            <person name="Nakamura Y."/>
            <person name="Ohara O."/>
            <person name="Isogai T."/>
            <person name="Sugano S."/>
        </authorList>
    </citation>
    <scope>NUCLEOTIDE SEQUENCE [LARGE SCALE MRNA] (ISOFORM 4)</scope>
    <source>
        <tissue>Cerebellum</tissue>
        <tissue>Spleen</tissue>
    </source>
</reference>
<reference key="2">
    <citation type="journal article" date="2005" name="DNA Res.">
        <title>Signal sequence and keyword trap in silico for selection of full-length human cDNAs encoding secretion or membrane proteins from oligo-capped cDNA libraries.</title>
        <authorList>
            <person name="Otsuki T."/>
            <person name="Ota T."/>
            <person name="Nishikawa T."/>
            <person name="Hayashi K."/>
            <person name="Suzuki Y."/>
            <person name="Yamamoto J."/>
            <person name="Wakamatsu A."/>
            <person name="Kimura K."/>
            <person name="Sakamoto K."/>
            <person name="Hatano N."/>
            <person name="Kawai Y."/>
            <person name="Ishii S."/>
            <person name="Saito K."/>
            <person name="Kojima S."/>
            <person name="Sugiyama T."/>
            <person name="Ono T."/>
            <person name="Okano K."/>
            <person name="Yoshikawa Y."/>
            <person name="Aotsuka S."/>
            <person name="Sasaki N."/>
            <person name="Hattori A."/>
            <person name="Okumura K."/>
            <person name="Nagai K."/>
            <person name="Sugano S."/>
            <person name="Isogai T."/>
        </authorList>
    </citation>
    <scope>NUCLEOTIDE SEQUENCE [LARGE SCALE MRNA] (ISOFORM 1)</scope>
    <source>
        <tissue>Embryo</tissue>
    </source>
</reference>
<reference key="3">
    <citation type="submission" date="2005-09" db="EMBL/GenBank/DDBJ databases">
        <authorList>
            <person name="Mural R.J."/>
            <person name="Istrail S."/>
            <person name="Sutton G.G."/>
            <person name="Florea L."/>
            <person name="Halpern A.L."/>
            <person name="Mobarry C.M."/>
            <person name="Lippert R."/>
            <person name="Walenz B."/>
            <person name="Shatkay H."/>
            <person name="Dew I."/>
            <person name="Miller J.R."/>
            <person name="Flanigan M.J."/>
            <person name="Edwards N.J."/>
            <person name="Bolanos R."/>
            <person name="Fasulo D."/>
            <person name="Halldorsson B.V."/>
            <person name="Hannenhalli S."/>
            <person name="Turner R."/>
            <person name="Yooseph S."/>
            <person name="Lu F."/>
            <person name="Nusskern D.R."/>
            <person name="Shue B.C."/>
            <person name="Zheng X.H."/>
            <person name="Zhong F."/>
            <person name="Delcher A.L."/>
            <person name="Huson D.H."/>
            <person name="Kravitz S.A."/>
            <person name="Mouchard L."/>
            <person name="Reinert K."/>
            <person name="Remington K.A."/>
            <person name="Clark A.G."/>
            <person name="Waterman M.S."/>
            <person name="Eichler E.E."/>
            <person name="Adams M.D."/>
            <person name="Hunkapiller M.W."/>
            <person name="Myers E.W."/>
            <person name="Venter J.C."/>
        </authorList>
    </citation>
    <scope>NUCLEOTIDE SEQUENCE [LARGE SCALE GENOMIC DNA]</scope>
</reference>
<reference key="4">
    <citation type="journal article" date="2004" name="Genome Res.">
        <title>The status, quality, and expansion of the NIH full-length cDNA project: the Mammalian Gene Collection (MGC).</title>
        <authorList>
            <consortium name="The MGC Project Team"/>
        </authorList>
    </citation>
    <scope>NUCLEOTIDE SEQUENCE [LARGE SCALE MRNA] (ISOFORMS 1; 2 AND 3)</scope>
    <source>
        <tissue>Brain</tissue>
        <tissue>Cervix</tissue>
        <tissue>Colon</tissue>
        <tissue>Muscle</tissue>
        <tissue>Ovary</tissue>
        <tissue>Prostate</tissue>
        <tissue>Skin</tissue>
    </source>
</reference>
<reference key="5">
    <citation type="journal article" date="2009" name="Sci. Signal.">
        <title>Quantitative phosphoproteomic analysis of T cell receptor signaling reveals system-wide modulation of protein-protein interactions.</title>
        <authorList>
            <person name="Mayya V."/>
            <person name="Lundgren D.H."/>
            <person name="Hwang S.-I."/>
            <person name="Rezaul K."/>
            <person name="Wu L."/>
            <person name="Eng J.K."/>
            <person name="Rodionov V."/>
            <person name="Han D.K."/>
        </authorList>
    </citation>
    <scope>PHOSPHORYLATION [LARGE SCALE ANALYSIS] AT SER-307</scope>
    <scope>IDENTIFICATION BY MASS SPECTROMETRY [LARGE SCALE ANALYSIS]</scope>
    <source>
        <tissue>Leukemic T-cell</tissue>
    </source>
</reference>
<reference key="6">
    <citation type="journal article" date="2015" name="Elife">
        <title>ABHD17 proteins are novel protein depalmitoylases that regulate N-Ras palmitate turnover and subcellular localization.</title>
        <authorList>
            <person name="Lin D.T."/>
            <person name="Conibear E."/>
        </authorList>
    </citation>
    <scope>FUNCTION</scope>
    <scope>CATALYTIC ACTIVITY</scope>
    <scope>ACTIVITY REGULATION</scope>
    <scope>SUBCELLULAR LOCATION</scope>
    <scope>MOTIF</scope>
    <scope>PALMITOYLATION</scope>
    <scope>ACTIVE SITE</scope>
    <scope>MUTAGENESIS OF 1-MET--PRO-19 AND SER-190</scope>
</reference>
<protein>
    <recommendedName>
        <fullName evidence="7">Alpha/beta hydrolase domain-containing protein 17A</fullName>
        <shortName evidence="9">Abhydrolase domain-containing protein 17A</shortName>
        <ecNumber evidence="4">3.1.2.22</ecNumber>
    </recommendedName>
</protein>
<dbReference type="EC" id="3.1.2.22" evidence="4"/>
<dbReference type="EMBL" id="AK024419">
    <property type="protein sequence ID" value="BAB15709.1"/>
    <property type="status" value="ALT_INIT"/>
    <property type="molecule type" value="mRNA"/>
</dbReference>
<dbReference type="EMBL" id="AK074043">
    <property type="protein sequence ID" value="BAB84869.1"/>
    <property type="status" value="ALT_INIT"/>
    <property type="molecule type" value="mRNA"/>
</dbReference>
<dbReference type="EMBL" id="AK289533">
    <property type="protein sequence ID" value="BAF82222.1"/>
    <property type="molecule type" value="mRNA"/>
</dbReference>
<dbReference type="EMBL" id="AK090438">
    <property type="protein sequence ID" value="BAC03419.1"/>
    <property type="status" value="ALT_INIT"/>
    <property type="molecule type" value="mRNA"/>
</dbReference>
<dbReference type="EMBL" id="AK074548">
    <property type="protein sequence ID" value="BAC11052.1"/>
    <property type="molecule type" value="mRNA"/>
</dbReference>
<dbReference type="EMBL" id="CH471139">
    <property type="protein sequence ID" value="EAW69441.1"/>
    <property type="molecule type" value="Genomic_DNA"/>
</dbReference>
<dbReference type="EMBL" id="CH471139">
    <property type="protein sequence ID" value="EAW69444.1"/>
    <property type="molecule type" value="Genomic_DNA"/>
</dbReference>
<dbReference type="EMBL" id="CH471139">
    <property type="protein sequence ID" value="EAW69446.1"/>
    <property type="molecule type" value="Genomic_DNA"/>
</dbReference>
<dbReference type="EMBL" id="BC000158">
    <property type="protein sequence ID" value="AAH00158.1"/>
    <property type="molecule type" value="mRNA"/>
</dbReference>
<dbReference type="EMBL" id="BC009256">
    <property type="protein sequence ID" value="AAH09256.1"/>
    <property type="molecule type" value="mRNA"/>
</dbReference>
<dbReference type="EMBL" id="BC011667">
    <property type="protein sequence ID" value="AAH11667.1"/>
    <property type="molecule type" value="mRNA"/>
</dbReference>
<dbReference type="EMBL" id="BC020512">
    <property type="protein sequence ID" value="AAH20512.1"/>
    <property type="molecule type" value="mRNA"/>
</dbReference>
<dbReference type="EMBL" id="BC033749">
    <property type="protein sequence ID" value="AAH33749.1"/>
    <property type="molecule type" value="mRNA"/>
</dbReference>
<dbReference type="EMBL" id="BC035961">
    <property type="protein sequence ID" value="AAH35961.1"/>
    <property type="molecule type" value="mRNA"/>
</dbReference>
<dbReference type="EMBL" id="BC071644">
    <property type="protein sequence ID" value="AAH71644.1"/>
    <property type="molecule type" value="mRNA"/>
</dbReference>
<dbReference type="EMBL" id="BC071876">
    <property type="protein sequence ID" value="AAH71876.1"/>
    <property type="molecule type" value="mRNA"/>
</dbReference>
<dbReference type="EMBL" id="BC094816">
    <property type="protein sequence ID" value="AAH94816.1"/>
    <property type="molecule type" value="mRNA"/>
</dbReference>
<dbReference type="CCDS" id="CCDS32867.1">
    <molecule id="Q96GS6-2"/>
</dbReference>
<dbReference type="CCDS" id="CCDS45902.1">
    <molecule id="Q96GS6-1"/>
</dbReference>
<dbReference type="RefSeq" id="NP_001123583.1">
    <molecule id="Q96GS6-1"/>
    <property type="nucleotide sequence ID" value="NM_001130111.2"/>
</dbReference>
<dbReference type="RefSeq" id="NP_112490.3">
    <molecule id="Q96GS6-2"/>
    <property type="nucleotide sequence ID" value="NM_031213.3"/>
</dbReference>
<dbReference type="RefSeq" id="XP_011526640.1">
    <molecule id="Q96GS6-2"/>
    <property type="nucleotide sequence ID" value="XM_011528338.3"/>
</dbReference>
<dbReference type="RefSeq" id="XP_016882830.1">
    <property type="nucleotide sequence ID" value="XM_017027341.1"/>
</dbReference>
<dbReference type="RefSeq" id="XP_047295443.1">
    <molecule id="Q96GS6-1"/>
    <property type="nucleotide sequence ID" value="XM_047439487.1"/>
</dbReference>
<dbReference type="RefSeq" id="XP_054178245.1">
    <molecule id="Q96GS6-1"/>
    <property type="nucleotide sequence ID" value="XM_054322270.1"/>
</dbReference>
<dbReference type="RefSeq" id="XP_054178247.1">
    <molecule id="Q96GS6-2"/>
    <property type="nucleotide sequence ID" value="XM_054322272.1"/>
</dbReference>
<dbReference type="SMR" id="Q96GS6"/>
<dbReference type="BioGRID" id="123627">
    <property type="interactions" value="47"/>
</dbReference>
<dbReference type="FunCoup" id="Q96GS6">
    <property type="interactions" value="1111"/>
</dbReference>
<dbReference type="IntAct" id="Q96GS6">
    <property type="interactions" value="37"/>
</dbReference>
<dbReference type="MINT" id="Q96GS6"/>
<dbReference type="STRING" id="9606.ENSP00000250974"/>
<dbReference type="ESTHER" id="human-ABHD17A">
    <property type="family name" value="ABHD17-depalmitoylase"/>
</dbReference>
<dbReference type="MEROPS" id="S09.052"/>
<dbReference type="TCDB" id="4.C.3.2.1">
    <property type="family name" value="the acyl-coa thioesterase (acoa-t) family"/>
</dbReference>
<dbReference type="TCDB" id="8.A.161.1.1">
    <property type="family name" value="the acyl protein thioesterase (apte) family"/>
</dbReference>
<dbReference type="iPTMnet" id="Q96GS6"/>
<dbReference type="PhosphoSitePlus" id="Q96GS6"/>
<dbReference type="SwissPalm" id="Q96GS6"/>
<dbReference type="BioMuta" id="ABHD17A"/>
<dbReference type="DMDM" id="74751891"/>
<dbReference type="jPOST" id="Q96GS6"/>
<dbReference type="MassIVE" id="Q96GS6"/>
<dbReference type="PeptideAtlas" id="Q96GS6"/>
<dbReference type="ProteomicsDB" id="76661">
    <molecule id="Q96GS6-1"/>
</dbReference>
<dbReference type="ProteomicsDB" id="76662">
    <molecule id="Q96GS6-2"/>
</dbReference>
<dbReference type="ProteomicsDB" id="76663">
    <molecule id="Q96GS6-3"/>
</dbReference>
<dbReference type="ProteomicsDB" id="76664">
    <molecule id="Q96GS6-4"/>
</dbReference>
<dbReference type="Pumba" id="Q96GS6"/>
<dbReference type="Antibodypedia" id="53691">
    <property type="antibodies" value="46 antibodies from 14 providers"/>
</dbReference>
<dbReference type="DNASU" id="81926"/>
<dbReference type="Ensembl" id="ENST00000250974.9">
    <molecule id="Q96GS6-2"/>
    <property type="protein sequence ID" value="ENSP00000250974.9"/>
    <property type="gene ID" value="ENSG00000129968.17"/>
</dbReference>
<dbReference type="Ensembl" id="ENST00000292577.12">
    <molecule id="Q96GS6-1"/>
    <property type="protein sequence ID" value="ENSP00000292577.6"/>
    <property type="gene ID" value="ENSG00000129968.17"/>
</dbReference>
<dbReference type="Ensembl" id="ENST00000676686.1">
    <molecule id="Q96GS6-1"/>
    <property type="protein sequence ID" value="ENSP00000504042.1"/>
    <property type="gene ID" value="ENSG00000129968.17"/>
</dbReference>
<dbReference type="GeneID" id="81926"/>
<dbReference type="KEGG" id="hsa:81926"/>
<dbReference type="MANE-Select" id="ENST00000292577.12">
    <property type="protein sequence ID" value="ENSP00000292577.6"/>
    <property type="RefSeq nucleotide sequence ID" value="NM_001130111.2"/>
    <property type="RefSeq protein sequence ID" value="NP_001123583.1"/>
</dbReference>
<dbReference type="UCSC" id="uc002luf.4">
    <molecule id="Q96GS6-1"/>
    <property type="organism name" value="human"/>
</dbReference>
<dbReference type="AGR" id="HGNC:28756"/>
<dbReference type="CTD" id="81926"/>
<dbReference type="GeneCards" id="ABHD17A"/>
<dbReference type="HGNC" id="HGNC:28756">
    <property type="gene designation" value="ABHD17A"/>
</dbReference>
<dbReference type="HPA" id="ENSG00000129968">
    <property type="expression patterns" value="Tissue enhanced (brain)"/>
</dbReference>
<dbReference type="MIM" id="617942">
    <property type="type" value="gene"/>
</dbReference>
<dbReference type="neXtProt" id="NX_Q96GS6"/>
<dbReference type="OpenTargets" id="ENSG00000129968"/>
<dbReference type="PharmGKB" id="PA134947443"/>
<dbReference type="VEuPathDB" id="HostDB:ENSG00000129968"/>
<dbReference type="GeneTree" id="ENSGT00940000155854"/>
<dbReference type="HOGENOM" id="CLU_029375_5_4_1"/>
<dbReference type="InParanoid" id="Q96GS6"/>
<dbReference type="OMA" id="YIRCVPG"/>
<dbReference type="OrthoDB" id="446723at2759"/>
<dbReference type="PAN-GO" id="Q96GS6">
    <property type="GO annotations" value="5 GO annotations based on evolutionary models"/>
</dbReference>
<dbReference type="PhylomeDB" id="Q96GS6"/>
<dbReference type="TreeFam" id="TF314365"/>
<dbReference type="PathwayCommons" id="Q96GS6"/>
<dbReference type="Reactome" id="R-HSA-9648002">
    <property type="pathway name" value="RAS processing"/>
</dbReference>
<dbReference type="SignaLink" id="Q96GS6"/>
<dbReference type="BioGRID-ORCS" id="81926">
    <property type="hits" value="135 hits in 1141 CRISPR screens"/>
</dbReference>
<dbReference type="ChiTaRS" id="ABHD17A">
    <property type="organism name" value="human"/>
</dbReference>
<dbReference type="GenomeRNAi" id="81926"/>
<dbReference type="Pharos" id="Q96GS6">
    <property type="development level" value="Tbio"/>
</dbReference>
<dbReference type="PRO" id="PR:Q96GS6"/>
<dbReference type="Proteomes" id="UP000005640">
    <property type="component" value="Chromosome 19"/>
</dbReference>
<dbReference type="RNAct" id="Q96GS6">
    <property type="molecule type" value="protein"/>
</dbReference>
<dbReference type="Bgee" id="ENSG00000129968">
    <property type="expression patterns" value="Expressed in granulocyte and 97 other cell types or tissues"/>
</dbReference>
<dbReference type="ExpressionAtlas" id="Q96GS6">
    <property type="expression patterns" value="baseline and differential"/>
</dbReference>
<dbReference type="GO" id="GO:0043197">
    <property type="term" value="C:dendritic spine"/>
    <property type="evidence" value="ECO:0007669"/>
    <property type="project" value="UniProtKB-SubCell"/>
</dbReference>
<dbReference type="GO" id="GO:0010008">
    <property type="term" value="C:endosome membrane"/>
    <property type="evidence" value="ECO:0000314"/>
    <property type="project" value="UniProtKB"/>
</dbReference>
<dbReference type="GO" id="GO:0098978">
    <property type="term" value="C:glutamatergic synapse"/>
    <property type="evidence" value="ECO:0007669"/>
    <property type="project" value="Ensembl"/>
</dbReference>
<dbReference type="GO" id="GO:0043231">
    <property type="term" value="C:intracellular membrane-bounded organelle"/>
    <property type="evidence" value="ECO:0000314"/>
    <property type="project" value="HPA"/>
</dbReference>
<dbReference type="GO" id="GO:0016020">
    <property type="term" value="C:membrane"/>
    <property type="evidence" value="ECO:0007005"/>
    <property type="project" value="UniProtKB"/>
</dbReference>
<dbReference type="GO" id="GO:0016607">
    <property type="term" value="C:nuclear speck"/>
    <property type="evidence" value="ECO:0000314"/>
    <property type="project" value="HPA"/>
</dbReference>
<dbReference type="GO" id="GO:0005886">
    <property type="term" value="C:plasma membrane"/>
    <property type="evidence" value="ECO:0000314"/>
    <property type="project" value="UniProtKB"/>
</dbReference>
<dbReference type="GO" id="GO:0098839">
    <property type="term" value="C:postsynaptic density membrane"/>
    <property type="evidence" value="ECO:0007669"/>
    <property type="project" value="UniProtKB-SubCell"/>
</dbReference>
<dbReference type="GO" id="GO:0098944">
    <property type="term" value="C:postsynaptic recycling endosome membrane"/>
    <property type="evidence" value="ECO:0007669"/>
    <property type="project" value="Ensembl"/>
</dbReference>
<dbReference type="GO" id="GO:0055038">
    <property type="term" value="C:recycling endosome membrane"/>
    <property type="evidence" value="ECO:0007669"/>
    <property type="project" value="Ensembl"/>
</dbReference>
<dbReference type="GO" id="GO:0008474">
    <property type="term" value="F:palmitoyl-(protein) hydrolase activity"/>
    <property type="evidence" value="ECO:0000314"/>
    <property type="project" value="UniProt"/>
</dbReference>
<dbReference type="GO" id="GO:1900226">
    <property type="term" value="P:negative regulation of NLRP3 inflammasome complex assembly"/>
    <property type="evidence" value="ECO:0000314"/>
    <property type="project" value="UniProt"/>
</dbReference>
<dbReference type="GO" id="GO:1902817">
    <property type="term" value="P:negative regulation of protein localization to microtubule"/>
    <property type="evidence" value="ECO:0007669"/>
    <property type="project" value="Ensembl"/>
</dbReference>
<dbReference type="GO" id="GO:1905668">
    <property type="term" value="P:positive regulation of protein localization to endosome"/>
    <property type="evidence" value="ECO:0007669"/>
    <property type="project" value="Ensembl"/>
</dbReference>
<dbReference type="GO" id="GO:0002084">
    <property type="term" value="P:protein depalmitoylation"/>
    <property type="evidence" value="ECO:0000315"/>
    <property type="project" value="UniProtKB"/>
</dbReference>
<dbReference type="GO" id="GO:0072657">
    <property type="term" value="P:protein localization to membrane"/>
    <property type="evidence" value="ECO:0000315"/>
    <property type="project" value="UniProtKB"/>
</dbReference>
<dbReference type="GO" id="GO:0099175">
    <property type="term" value="P:regulation of postsynapse organization"/>
    <property type="evidence" value="ECO:0000318"/>
    <property type="project" value="GO_Central"/>
</dbReference>
<dbReference type="FunFam" id="3.40.50.1820:FF:000008">
    <property type="entry name" value="Alpha/beta hydrolase domain-containing protein 17B"/>
    <property type="match status" value="1"/>
</dbReference>
<dbReference type="Gene3D" id="3.40.50.1820">
    <property type="entry name" value="alpha/beta hydrolase"/>
    <property type="match status" value="1"/>
</dbReference>
<dbReference type="InterPro" id="IPR029058">
    <property type="entry name" value="AB_hydrolase_fold"/>
</dbReference>
<dbReference type="InterPro" id="IPR022742">
    <property type="entry name" value="Hydrolase_4"/>
</dbReference>
<dbReference type="PANTHER" id="PTHR12277">
    <property type="entry name" value="ALPHA/BETA HYDROLASE DOMAIN-CONTAINING PROTEIN"/>
    <property type="match status" value="1"/>
</dbReference>
<dbReference type="PANTHER" id="PTHR12277:SF52">
    <property type="entry name" value="ALPHA_BETA HYDROLASE DOMAIN-CONTAINING PROTEIN 17A"/>
    <property type="match status" value="1"/>
</dbReference>
<dbReference type="Pfam" id="PF12146">
    <property type="entry name" value="Hydrolase_4"/>
    <property type="match status" value="1"/>
</dbReference>
<dbReference type="SUPFAM" id="SSF53474">
    <property type="entry name" value="alpha/beta-Hydrolases"/>
    <property type="match status" value="1"/>
</dbReference>
<name>AB17A_HUMAN</name>
<comment type="function">
    <text evidence="2 4">Hydrolyzes fatty acids from S-acylated cysteine residues in proteins (PubMed:26701913). Has depalmitoylating activity towards NRAS (PubMed:26701913). Has depalmitoylating activity towards DLG4/PSD95 (PubMed:26701913). May have depalmitoylating activity towards MAP6 (By similarity).</text>
</comment>
<comment type="catalytic activity">
    <reaction evidence="4">
        <text>S-hexadecanoyl-L-cysteinyl-[protein] + H2O = L-cysteinyl-[protein] + hexadecanoate + H(+)</text>
        <dbReference type="Rhea" id="RHEA:19233"/>
        <dbReference type="Rhea" id="RHEA-COMP:10131"/>
        <dbReference type="Rhea" id="RHEA-COMP:11032"/>
        <dbReference type="ChEBI" id="CHEBI:7896"/>
        <dbReference type="ChEBI" id="CHEBI:15377"/>
        <dbReference type="ChEBI" id="CHEBI:15378"/>
        <dbReference type="ChEBI" id="CHEBI:29950"/>
        <dbReference type="ChEBI" id="CHEBI:74151"/>
        <dbReference type="EC" id="3.1.2.22"/>
    </reaction>
</comment>
<comment type="activity regulation">
    <text evidence="4">Inhibited by palmostatin-B.</text>
</comment>
<comment type="interaction">
    <interactant intactId="EBI-2870273">
        <id>Q96GS6</id>
    </interactant>
    <interactant intactId="EBI-10187349">
        <id>O60760</id>
        <label>HPGDS</label>
    </interactant>
    <organismsDiffer>false</organismsDiffer>
    <experiments>4</experiments>
</comment>
<comment type="interaction">
    <interactant intactId="EBI-2870273">
        <id>Q96GS6</id>
    </interactant>
    <interactant intactId="EBI-3957603">
        <id>P09022</id>
        <label>Hoxa1</label>
    </interactant>
    <organismsDiffer>true</organismsDiffer>
    <experiments>3</experiments>
</comment>
<comment type="subcellular location">
    <subcellularLocation>
        <location evidence="4">Cell membrane</location>
        <topology evidence="4">Lipid-anchor</topology>
        <orientation evidence="4">Cytoplasmic side</orientation>
    </subcellularLocation>
    <subcellularLocation>
        <location evidence="4">Endosome membrane</location>
        <topology evidence="4">Lipid-anchor</topology>
        <orientation evidence="4">Cytoplasmic side</orientation>
    </subcellularLocation>
    <subcellularLocation>
        <location evidence="2">Cell projection</location>
        <location evidence="2">Dendritic spine</location>
    </subcellularLocation>
    <subcellularLocation>
        <location evidence="2">Postsynaptic density membrane</location>
    </subcellularLocation>
</comment>
<comment type="alternative products">
    <event type="alternative splicing"/>
    <isoform>
        <id>Q96GS6-1</id>
        <name>1</name>
        <sequence type="displayed"/>
    </isoform>
    <isoform>
        <id>Q96GS6-2</id>
        <name>2</name>
        <sequence type="described" ref="VSP_027268"/>
    </isoform>
    <isoform>
        <id>Q96GS6-3</id>
        <name>3</name>
        <sequence type="described" ref="VSP_027269 VSP_027270"/>
    </isoform>
    <isoform>
        <id>Q96GS6-4</id>
        <name>4</name>
        <sequence type="described" ref="VSP_027271"/>
    </isoform>
</comment>
<comment type="PTM">
    <text evidence="3 8">Palmitoylated on cysteine residues located in a cysteine cluster at the N-terminus which promotes membrane localization (PubMed:26701913). Palmitoylation is required for post-synaptic localization and for depalmitoylating activity towards DLG4/PSD95 (By similarity).</text>
</comment>
<comment type="similarity">
    <text evidence="7">Belongs to the AB hydrolase superfamily. ABHD17 family.</text>
</comment>
<comment type="sequence caution" evidence="7">
    <conflict type="erroneous initiation">
        <sequence resource="EMBL-CDS" id="BAB15709"/>
    </conflict>
</comment>
<comment type="sequence caution" evidence="7">
    <conflict type="erroneous initiation">
        <sequence resource="EMBL-CDS" id="BAB84869"/>
    </conflict>
</comment>
<comment type="sequence caution" evidence="7">
    <conflict type="erroneous initiation">
        <sequence resource="EMBL-CDS" id="BAC03419"/>
    </conflict>
</comment>